<dbReference type="EMBL" id="AF036708">
    <property type="protein sequence ID" value="AAB95394.1"/>
    <property type="molecule type" value="Genomic_DNA"/>
</dbReference>
<dbReference type="EMBL" id="AE015450">
    <property type="protein sequence ID" value="AAP56408.1"/>
    <property type="molecule type" value="Genomic_DNA"/>
</dbReference>
<dbReference type="RefSeq" id="WP_011113287.1">
    <property type="nucleotide sequence ID" value="NC_004829.2"/>
</dbReference>
<dbReference type="SMR" id="O52339"/>
<dbReference type="GeneID" id="93509876"/>
<dbReference type="KEGG" id="mga:MGA_0721"/>
<dbReference type="PATRIC" id="fig|233150.7.peg.62"/>
<dbReference type="HOGENOM" id="CLU_078858_2_1_14"/>
<dbReference type="OrthoDB" id="9802589at2"/>
<dbReference type="Proteomes" id="UP000001418">
    <property type="component" value="Chromosome"/>
</dbReference>
<dbReference type="GO" id="GO:0022625">
    <property type="term" value="C:cytosolic large ribosomal subunit"/>
    <property type="evidence" value="ECO:0007669"/>
    <property type="project" value="TreeGrafter"/>
</dbReference>
<dbReference type="GO" id="GO:0019843">
    <property type="term" value="F:rRNA binding"/>
    <property type="evidence" value="ECO:0007669"/>
    <property type="project" value="UniProtKB-UniRule"/>
</dbReference>
<dbReference type="GO" id="GO:0003735">
    <property type="term" value="F:structural constituent of ribosome"/>
    <property type="evidence" value="ECO:0007669"/>
    <property type="project" value="InterPro"/>
</dbReference>
<dbReference type="GO" id="GO:0000049">
    <property type="term" value="F:tRNA binding"/>
    <property type="evidence" value="ECO:0007669"/>
    <property type="project" value="UniProtKB-KW"/>
</dbReference>
<dbReference type="GO" id="GO:0006412">
    <property type="term" value="P:translation"/>
    <property type="evidence" value="ECO:0007669"/>
    <property type="project" value="UniProtKB-UniRule"/>
</dbReference>
<dbReference type="CDD" id="cd01433">
    <property type="entry name" value="Ribosomal_L16_L10e"/>
    <property type="match status" value="1"/>
</dbReference>
<dbReference type="FunFam" id="3.90.1170.10:FF:000001">
    <property type="entry name" value="50S ribosomal protein L16"/>
    <property type="match status" value="1"/>
</dbReference>
<dbReference type="Gene3D" id="3.90.1170.10">
    <property type="entry name" value="Ribosomal protein L10e/L16"/>
    <property type="match status" value="1"/>
</dbReference>
<dbReference type="HAMAP" id="MF_01342">
    <property type="entry name" value="Ribosomal_uL16"/>
    <property type="match status" value="1"/>
</dbReference>
<dbReference type="InterPro" id="IPR047873">
    <property type="entry name" value="Ribosomal_uL16"/>
</dbReference>
<dbReference type="InterPro" id="IPR000114">
    <property type="entry name" value="Ribosomal_uL16_bact-type"/>
</dbReference>
<dbReference type="InterPro" id="IPR020798">
    <property type="entry name" value="Ribosomal_uL16_CS"/>
</dbReference>
<dbReference type="InterPro" id="IPR016180">
    <property type="entry name" value="Ribosomal_uL16_dom"/>
</dbReference>
<dbReference type="InterPro" id="IPR036920">
    <property type="entry name" value="Ribosomal_uL16_sf"/>
</dbReference>
<dbReference type="NCBIfam" id="TIGR01164">
    <property type="entry name" value="rplP_bact"/>
    <property type="match status" value="1"/>
</dbReference>
<dbReference type="PANTHER" id="PTHR12220">
    <property type="entry name" value="50S/60S RIBOSOMAL PROTEIN L16"/>
    <property type="match status" value="1"/>
</dbReference>
<dbReference type="PANTHER" id="PTHR12220:SF13">
    <property type="entry name" value="LARGE RIBOSOMAL SUBUNIT PROTEIN UL16M"/>
    <property type="match status" value="1"/>
</dbReference>
<dbReference type="Pfam" id="PF00252">
    <property type="entry name" value="Ribosomal_L16"/>
    <property type="match status" value="1"/>
</dbReference>
<dbReference type="PRINTS" id="PR00060">
    <property type="entry name" value="RIBOSOMALL16"/>
</dbReference>
<dbReference type="SUPFAM" id="SSF54686">
    <property type="entry name" value="Ribosomal protein L16p/L10e"/>
    <property type="match status" value="1"/>
</dbReference>
<dbReference type="PROSITE" id="PS00586">
    <property type="entry name" value="RIBOSOMAL_L16_1"/>
    <property type="match status" value="1"/>
</dbReference>
<dbReference type="PROSITE" id="PS00701">
    <property type="entry name" value="RIBOSOMAL_L16_2"/>
    <property type="match status" value="1"/>
</dbReference>
<sequence length="138" mass="15433">MLQPKRTKYRKPHNVSYEGKAKGNSYVAFGEYGIMATNGAWIDARQIESARIAISKQLGKTGKMWIRIFPHMSKTKKPLEVRMGSGKGNPEFWVAVVKEGTVMFEVANIPEAQMKEALTRAGHKLGVTWKIVARQGAQ</sequence>
<reference key="1">
    <citation type="journal article" date="2000" name="Mol. Biol. (Mosk.)">
        <title>Determination and analysis of the nucleotide sequence of a segment of a Mycoplasma gallisepticum strain A5969 chromosome, containing operons S10 and rrn23-5.</title>
        <authorList>
            <person name="Skamrov A.V."/>
            <person name="Gol'dman M.A."/>
            <person name="Feoktistova E.S."/>
            <person name="Bibilashvili R.S."/>
        </authorList>
    </citation>
    <scope>NUCLEOTIDE SEQUENCE [GENOMIC DNA]</scope>
    <source>
        <strain>A5969Var.B</strain>
    </source>
</reference>
<reference key="2">
    <citation type="journal article" date="2003" name="Microbiology">
        <title>The complete genome sequence of the avian pathogen Mycoplasma gallisepticum strain R(low).</title>
        <authorList>
            <person name="Papazisi L."/>
            <person name="Gorton T.S."/>
            <person name="Kutish G."/>
            <person name="Markham P.F."/>
            <person name="Browning G.F."/>
            <person name="Nguyen D.K."/>
            <person name="Swartzell S."/>
            <person name="Madan A."/>
            <person name="Mahairas G."/>
            <person name="Geary S.J."/>
        </authorList>
    </citation>
    <scope>NUCLEOTIDE SEQUENCE [LARGE SCALE GENOMIC DNA]</scope>
    <source>
        <strain>R(low / passage 15 / clone 2)</strain>
    </source>
</reference>
<gene>
    <name evidence="1" type="primary">rplP</name>
    <name evidence="1" type="synonym">rpl16</name>
    <name type="ordered locus">MYCGA0580</name>
    <name type="ORF">MGA_0721</name>
</gene>
<accession>O52339</accession>
<comment type="function">
    <text evidence="1">Binds 23S rRNA and is also seen to make contacts with the A and possibly P site tRNAs.</text>
</comment>
<comment type="subunit">
    <text evidence="1">Part of the 50S ribosomal subunit.</text>
</comment>
<comment type="similarity">
    <text evidence="1">Belongs to the universal ribosomal protein uL16 family.</text>
</comment>
<feature type="chain" id="PRO_0000062140" description="Large ribosomal subunit protein uL16">
    <location>
        <begin position="1"/>
        <end position="138"/>
    </location>
</feature>
<feature type="sequence conflict" description="In Ref. 1." evidence="2" ref="1">
    <original>QMKEALTRAGHKLGVTWKIVARQGAQ</original>
    <variation>ETKEAWCYLKDRC</variation>
    <location>
        <begin position="113"/>
        <end position="138"/>
    </location>
</feature>
<protein>
    <recommendedName>
        <fullName evidence="1">Large ribosomal subunit protein uL16</fullName>
    </recommendedName>
    <alternativeName>
        <fullName evidence="2">50S ribosomal protein L16</fullName>
    </alternativeName>
</protein>
<name>RL16_MYCGA</name>
<organism>
    <name type="scientific">Mycoplasmoides gallisepticum (strain R(low / passage 15 / clone 2))</name>
    <name type="common">Mycoplasma gallisepticum</name>
    <dbReference type="NCBI Taxonomy" id="710127"/>
    <lineage>
        <taxon>Bacteria</taxon>
        <taxon>Bacillati</taxon>
        <taxon>Mycoplasmatota</taxon>
        <taxon>Mycoplasmoidales</taxon>
        <taxon>Mycoplasmoidaceae</taxon>
        <taxon>Mycoplasmoides</taxon>
    </lineage>
</organism>
<proteinExistence type="inferred from homology"/>
<evidence type="ECO:0000255" key="1">
    <source>
        <dbReference type="HAMAP-Rule" id="MF_01342"/>
    </source>
</evidence>
<evidence type="ECO:0000305" key="2"/>
<keyword id="KW-1185">Reference proteome</keyword>
<keyword id="KW-0687">Ribonucleoprotein</keyword>
<keyword id="KW-0689">Ribosomal protein</keyword>
<keyword id="KW-0694">RNA-binding</keyword>
<keyword id="KW-0699">rRNA-binding</keyword>
<keyword id="KW-0820">tRNA-binding</keyword>